<organism>
    <name type="scientific">Mus musculus</name>
    <name type="common">Mouse</name>
    <dbReference type="NCBI Taxonomy" id="10090"/>
    <lineage>
        <taxon>Eukaryota</taxon>
        <taxon>Metazoa</taxon>
        <taxon>Chordata</taxon>
        <taxon>Craniata</taxon>
        <taxon>Vertebrata</taxon>
        <taxon>Euteleostomi</taxon>
        <taxon>Mammalia</taxon>
        <taxon>Eutheria</taxon>
        <taxon>Euarchontoglires</taxon>
        <taxon>Glires</taxon>
        <taxon>Rodentia</taxon>
        <taxon>Myomorpha</taxon>
        <taxon>Muroidea</taxon>
        <taxon>Muridae</taxon>
        <taxon>Murinae</taxon>
        <taxon>Mus</taxon>
        <taxon>Mus</taxon>
    </lineage>
</organism>
<evidence type="ECO:0000250" key="1">
    <source>
        <dbReference type="UniProtKB" id="Q9NQ86"/>
    </source>
</evidence>
<evidence type="ECO:0000255" key="2"/>
<evidence type="ECO:0000255" key="3">
    <source>
        <dbReference type="PROSITE-ProRule" id="PRU00024"/>
    </source>
</evidence>
<evidence type="ECO:0000255" key="4">
    <source>
        <dbReference type="PROSITE-ProRule" id="PRU00175"/>
    </source>
</evidence>
<evidence type="ECO:0000255" key="5">
    <source>
        <dbReference type="PROSITE-ProRule" id="PRU00316"/>
    </source>
</evidence>
<evidence type="ECO:0000255" key="6">
    <source>
        <dbReference type="PROSITE-ProRule" id="PRU00548"/>
    </source>
</evidence>
<evidence type="ECO:0000255" key="7">
    <source>
        <dbReference type="PROSITE-ProRule" id="PRU00586"/>
    </source>
</evidence>
<evidence type="ECO:0000256" key="8">
    <source>
        <dbReference type="SAM" id="MobiDB-lite"/>
    </source>
</evidence>
<evidence type="ECO:0000269" key="9">
    <source>
    </source>
</evidence>
<evidence type="ECO:0000269" key="10">
    <source>
    </source>
</evidence>
<evidence type="ECO:0000269" key="11">
    <source>
    </source>
</evidence>
<evidence type="ECO:0000303" key="12">
    <source>
    </source>
</evidence>
<evidence type="ECO:0000305" key="13"/>
<sequence>MSESEEISEFGYIMELLAKGKVTIKNIEKELICPACKELFTHPLILPCQHSVCHKCVKELLLSLDDSFNDVASDSSNQSSPRLRLTSPSMDKIDKINRPGWKRNSLTPRPTTFPCPGCEHDVDLGERGVSGLFRNFTLETIVERYRQAARAATAIMCDLCKPPPQESTKSCMDCSASYCNECFKIYHPWGTVKAQHEYVGPTTNFRPKVLMCPEHETERINMYCELCRRPVCHLCKLGGNHSNHRVTTMSSAYKTLKEKLSKDIDFLIGKESQVKSQISELNLLMKETECNGERAKEEALAHFEKLFEILEDRKSSVLKAIDASKKLRLDKFHTQMEEYQGLLENNGLVGYAQEVLKETDQSCFVQTAKQLHLRIQKATESLKSFRPAAQASFEDYVVNISKQTEVLGELSFFSSGIDIPEINEEQSKVYNNALIDWHHPEKDKADSYVLEYRKINRDEEMISWNEIEVHGTSKVVSNLESNSPYAFRVRAYRGSICSPCSRELILHTPPAPVFSFLFDEKCGYNTEHLLLNLKRDRVESRAGFNVLLAAERIQVGHYTSLDYIIGDVGVTKGKHFWACRVEPYSYLVKVGVASSDKLQEWLRSPRDAASPRYEQDSGHDSGSEDACFDSSQPFTLVTIGMKKFFIPKSPTSSNEPENRVLPMPTSIGIFLDCDKGKVSFYDMDHMKCLYERQVDCSHTMYPAFALMGSGGIQLEEAITAKYLEYEEDV</sequence>
<accession>Q80WG7</accession>
<accession>Q7TNM1</accession>
<dbReference type="EC" id="2.3.2.27" evidence="10"/>
<dbReference type="EMBL" id="AB103063">
    <property type="protein sequence ID" value="BAC76066.1"/>
    <property type="status" value="ALT_FRAME"/>
    <property type="molecule type" value="mRNA"/>
</dbReference>
<dbReference type="EMBL" id="AY251389">
    <property type="protein sequence ID" value="AAP51209.1"/>
    <property type="molecule type" value="mRNA"/>
</dbReference>
<dbReference type="EMBL" id="BC058106">
    <property type="protein sequence ID" value="AAH58106.1"/>
    <property type="molecule type" value="mRNA"/>
</dbReference>
<dbReference type="CCDS" id="CCDS29229.1"/>
<dbReference type="RefSeq" id="NP_001164326.1">
    <property type="nucleotide sequence ID" value="NM_001170855.1"/>
</dbReference>
<dbReference type="RefSeq" id="NP_849203.2">
    <property type="nucleotide sequence ID" value="NM_178872.4"/>
</dbReference>
<dbReference type="SMR" id="Q80WG7"/>
<dbReference type="BioGRID" id="205766">
    <property type="interactions" value="2"/>
</dbReference>
<dbReference type="FunCoup" id="Q80WG7">
    <property type="interactions" value="1290"/>
</dbReference>
<dbReference type="IntAct" id="Q80WG7">
    <property type="interactions" value="1"/>
</dbReference>
<dbReference type="STRING" id="10090.ENSMUSP00000037978"/>
<dbReference type="iPTMnet" id="Q80WG7"/>
<dbReference type="PhosphoSitePlus" id="Q80WG7"/>
<dbReference type="PaxDb" id="10090-ENSMUSP00000037978"/>
<dbReference type="ProteomicsDB" id="298216"/>
<dbReference type="Antibodypedia" id="25412">
    <property type="antibodies" value="231 antibodies from 27 providers"/>
</dbReference>
<dbReference type="DNASU" id="28105"/>
<dbReference type="Ensembl" id="ENSMUST00000037011.6">
    <property type="protein sequence ID" value="ENSMUSP00000037978.5"/>
    <property type="gene ID" value="ENSMUSG00000033949.13"/>
</dbReference>
<dbReference type="GeneID" id="28105"/>
<dbReference type="KEGG" id="mmu:28105"/>
<dbReference type="UCSC" id="uc008evi.2">
    <property type="organism name" value="mouse"/>
</dbReference>
<dbReference type="AGR" id="MGI:106264"/>
<dbReference type="CTD" id="55521"/>
<dbReference type="MGI" id="MGI:106264">
    <property type="gene designation" value="Trim36"/>
</dbReference>
<dbReference type="VEuPathDB" id="HostDB:ENSMUSG00000033949"/>
<dbReference type="eggNOG" id="KOG2177">
    <property type="taxonomic scope" value="Eukaryota"/>
</dbReference>
<dbReference type="GeneTree" id="ENSGT00940000158373"/>
<dbReference type="HOGENOM" id="CLU_013137_19_3_1"/>
<dbReference type="InParanoid" id="Q80WG7"/>
<dbReference type="OMA" id="SFYDTEH"/>
<dbReference type="OrthoDB" id="10040278at2759"/>
<dbReference type="PhylomeDB" id="Q80WG7"/>
<dbReference type="TreeFam" id="TF315216"/>
<dbReference type="Reactome" id="R-MMU-983168">
    <property type="pathway name" value="Antigen processing: Ubiquitination &amp; Proteasome degradation"/>
</dbReference>
<dbReference type="BioGRID-ORCS" id="28105">
    <property type="hits" value="2 hits in 79 CRISPR screens"/>
</dbReference>
<dbReference type="ChiTaRS" id="Trim36">
    <property type="organism name" value="mouse"/>
</dbReference>
<dbReference type="PRO" id="PR:Q80WG7"/>
<dbReference type="Proteomes" id="UP000000589">
    <property type="component" value="Chromosome 18"/>
</dbReference>
<dbReference type="RNAct" id="Q80WG7">
    <property type="molecule type" value="protein"/>
</dbReference>
<dbReference type="Bgee" id="ENSMUSG00000033949">
    <property type="expression patterns" value="Expressed in seminiferous tubule of testis and 140 other cell types or tissues"/>
</dbReference>
<dbReference type="ExpressionAtlas" id="Q80WG7">
    <property type="expression patterns" value="baseline and differential"/>
</dbReference>
<dbReference type="GO" id="GO:0001669">
    <property type="term" value="C:acrosomal vesicle"/>
    <property type="evidence" value="ECO:0000314"/>
    <property type="project" value="MGI"/>
</dbReference>
<dbReference type="GO" id="GO:0005829">
    <property type="term" value="C:cytosol"/>
    <property type="evidence" value="ECO:0007669"/>
    <property type="project" value="Ensembl"/>
</dbReference>
<dbReference type="GO" id="GO:0015630">
    <property type="term" value="C:microtubule cytoskeleton"/>
    <property type="evidence" value="ECO:0000266"/>
    <property type="project" value="MGI"/>
</dbReference>
<dbReference type="GO" id="GO:0005886">
    <property type="term" value="C:plasma membrane"/>
    <property type="evidence" value="ECO:0007669"/>
    <property type="project" value="Ensembl"/>
</dbReference>
<dbReference type="GO" id="GO:0043014">
    <property type="term" value="F:alpha-tubulin binding"/>
    <property type="evidence" value="ECO:0000314"/>
    <property type="project" value="UniProtKB"/>
</dbReference>
<dbReference type="GO" id="GO:0004842">
    <property type="term" value="F:ubiquitin-protein transferase activity"/>
    <property type="evidence" value="ECO:0000314"/>
    <property type="project" value="UniProtKB"/>
</dbReference>
<dbReference type="GO" id="GO:0008270">
    <property type="term" value="F:zinc ion binding"/>
    <property type="evidence" value="ECO:0007669"/>
    <property type="project" value="UniProtKB-KW"/>
</dbReference>
<dbReference type="GO" id="GO:0007340">
    <property type="term" value="P:acrosome reaction"/>
    <property type="evidence" value="ECO:0000315"/>
    <property type="project" value="MGI"/>
</dbReference>
<dbReference type="GO" id="GO:0001578">
    <property type="term" value="P:microtubule bundle formation"/>
    <property type="evidence" value="ECO:0000266"/>
    <property type="project" value="MGI"/>
</dbReference>
<dbReference type="GO" id="GO:0000281">
    <property type="term" value="P:mitotic cytokinesis"/>
    <property type="evidence" value="ECO:0000250"/>
    <property type="project" value="UniProtKB"/>
</dbReference>
<dbReference type="GO" id="GO:0051726">
    <property type="term" value="P:regulation of cell cycle"/>
    <property type="evidence" value="ECO:0000315"/>
    <property type="project" value="UniProtKB"/>
</dbReference>
<dbReference type="GO" id="GO:0070507">
    <property type="term" value="P:regulation of microtubule cytoskeleton organization"/>
    <property type="evidence" value="ECO:0000250"/>
    <property type="project" value="UniProtKB"/>
</dbReference>
<dbReference type="GO" id="GO:0007051">
    <property type="term" value="P:spindle organization"/>
    <property type="evidence" value="ECO:0000250"/>
    <property type="project" value="UniProtKB"/>
</dbReference>
<dbReference type="CDD" id="cd19848">
    <property type="entry name" value="Bbox1_TRIM36_C-I"/>
    <property type="match status" value="1"/>
</dbReference>
<dbReference type="CDD" id="cd19778">
    <property type="entry name" value="Bbox2_TRIM36_C-I"/>
    <property type="match status" value="1"/>
</dbReference>
<dbReference type="CDD" id="cd00063">
    <property type="entry name" value="FN3"/>
    <property type="match status" value="1"/>
</dbReference>
<dbReference type="CDD" id="cd16756">
    <property type="entry name" value="RING-HC_TRIM36_C-I"/>
    <property type="match status" value="1"/>
</dbReference>
<dbReference type="CDD" id="cd12894">
    <property type="entry name" value="SPRY_PRY_TRIM36"/>
    <property type="match status" value="1"/>
</dbReference>
<dbReference type="FunFam" id="2.60.120.920:FF:000029">
    <property type="entry name" value="E3 ubiquitin-protein ligase TRIM36"/>
    <property type="match status" value="1"/>
</dbReference>
<dbReference type="FunFam" id="3.30.160.60:FF:000567">
    <property type="entry name" value="E3 ubiquitin-protein ligase TRIM36 isoform X1"/>
    <property type="match status" value="1"/>
</dbReference>
<dbReference type="FunFam" id="4.10.830.40:FF:000001">
    <property type="entry name" value="E3 ubiquitin-protein ligase TRIM9 isoform X1"/>
    <property type="match status" value="1"/>
</dbReference>
<dbReference type="Gene3D" id="1.20.5.170">
    <property type="match status" value="1"/>
</dbReference>
<dbReference type="Gene3D" id="2.60.120.920">
    <property type="match status" value="1"/>
</dbReference>
<dbReference type="Gene3D" id="4.10.830.40">
    <property type="match status" value="1"/>
</dbReference>
<dbReference type="Gene3D" id="3.30.160.60">
    <property type="entry name" value="Classic Zinc Finger"/>
    <property type="match status" value="1"/>
</dbReference>
<dbReference type="Gene3D" id="2.60.40.10">
    <property type="entry name" value="Immunoglobulins"/>
    <property type="match status" value="1"/>
</dbReference>
<dbReference type="Gene3D" id="3.30.40.10">
    <property type="entry name" value="Zinc/RING finger domain, C3HC4 (zinc finger)"/>
    <property type="match status" value="1"/>
</dbReference>
<dbReference type="InterPro" id="IPR001870">
    <property type="entry name" value="B30.2/SPRY"/>
</dbReference>
<dbReference type="InterPro" id="IPR043136">
    <property type="entry name" value="B30.2/SPRY_sf"/>
</dbReference>
<dbReference type="InterPro" id="IPR013320">
    <property type="entry name" value="ConA-like_dom_sf"/>
</dbReference>
<dbReference type="InterPro" id="IPR017903">
    <property type="entry name" value="COS_domain"/>
</dbReference>
<dbReference type="InterPro" id="IPR050617">
    <property type="entry name" value="E3_ligase_FN3/SPRY"/>
</dbReference>
<dbReference type="InterPro" id="IPR003961">
    <property type="entry name" value="FN3_dom"/>
</dbReference>
<dbReference type="InterPro" id="IPR036116">
    <property type="entry name" value="FN3_sf"/>
</dbReference>
<dbReference type="InterPro" id="IPR013783">
    <property type="entry name" value="Ig-like_fold"/>
</dbReference>
<dbReference type="InterPro" id="IPR040859">
    <property type="entry name" value="Midline-1_COS"/>
</dbReference>
<dbReference type="InterPro" id="IPR035727">
    <property type="entry name" value="SPRY/PRY_TRIM36"/>
</dbReference>
<dbReference type="InterPro" id="IPR047066">
    <property type="entry name" value="TRIM36_Bbox1_Zfn"/>
</dbReference>
<dbReference type="InterPro" id="IPR047065">
    <property type="entry name" value="TRIM36_Bbox2_Zfn"/>
</dbReference>
<dbReference type="InterPro" id="IPR027726">
    <property type="entry name" value="Trim36_HC-RING"/>
</dbReference>
<dbReference type="InterPro" id="IPR027370">
    <property type="entry name" value="Znf-RING_euk"/>
</dbReference>
<dbReference type="InterPro" id="IPR000315">
    <property type="entry name" value="Znf_B-box"/>
</dbReference>
<dbReference type="InterPro" id="IPR001841">
    <property type="entry name" value="Znf_RING"/>
</dbReference>
<dbReference type="InterPro" id="IPR013083">
    <property type="entry name" value="Znf_RING/FYVE/PHD"/>
</dbReference>
<dbReference type="InterPro" id="IPR017907">
    <property type="entry name" value="Znf_RING_CS"/>
</dbReference>
<dbReference type="PANTHER" id="PTHR24099:SF18">
    <property type="entry name" value="E3 UBIQUITIN-PROTEIN LIGASE TRIM36"/>
    <property type="match status" value="1"/>
</dbReference>
<dbReference type="PANTHER" id="PTHR24099">
    <property type="entry name" value="E3 UBIQUITIN-PROTEIN LIGASE TRIM36-RELATED"/>
    <property type="match status" value="1"/>
</dbReference>
<dbReference type="Pfam" id="PF18568">
    <property type="entry name" value="COS"/>
    <property type="match status" value="1"/>
</dbReference>
<dbReference type="Pfam" id="PF00643">
    <property type="entry name" value="zf-B_box"/>
    <property type="match status" value="1"/>
</dbReference>
<dbReference type="Pfam" id="PF13445">
    <property type="entry name" value="zf-RING_UBOX"/>
    <property type="match status" value="1"/>
</dbReference>
<dbReference type="SMART" id="SM00336">
    <property type="entry name" value="BBOX"/>
    <property type="match status" value="1"/>
</dbReference>
<dbReference type="SMART" id="SM00184">
    <property type="entry name" value="RING"/>
    <property type="match status" value="1"/>
</dbReference>
<dbReference type="SUPFAM" id="SSF57845">
    <property type="entry name" value="B-box zinc-binding domain"/>
    <property type="match status" value="1"/>
</dbReference>
<dbReference type="SUPFAM" id="SSF49899">
    <property type="entry name" value="Concanavalin A-like lectins/glucanases"/>
    <property type="match status" value="1"/>
</dbReference>
<dbReference type="SUPFAM" id="SSF49265">
    <property type="entry name" value="Fibronectin type III"/>
    <property type="match status" value="1"/>
</dbReference>
<dbReference type="SUPFAM" id="SSF57850">
    <property type="entry name" value="RING/U-box"/>
    <property type="match status" value="1"/>
</dbReference>
<dbReference type="PROSITE" id="PS50188">
    <property type="entry name" value="B302_SPRY"/>
    <property type="match status" value="1"/>
</dbReference>
<dbReference type="PROSITE" id="PS51262">
    <property type="entry name" value="COS"/>
    <property type="match status" value="1"/>
</dbReference>
<dbReference type="PROSITE" id="PS50853">
    <property type="entry name" value="FN3"/>
    <property type="match status" value="1"/>
</dbReference>
<dbReference type="PROSITE" id="PS50119">
    <property type="entry name" value="ZF_BBOX"/>
    <property type="match status" value="1"/>
</dbReference>
<dbReference type="PROSITE" id="PS00518">
    <property type="entry name" value="ZF_RING_1"/>
    <property type="match status" value="1"/>
</dbReference>
<dbReference type="PROSITE" id="PS50089">
    <property type="entry name" value="ZF_RING_2"/>
    <property type="match status" value="1"/>
</dbReference>
<protein>
    <recommendedName>
        <fullName>E3 ubiquitin-protein ligase Trim36</fullName>
        <ecNumber evidence="10">2.3.2.27</ecNumber>
    </recommendedName>
    <alternativeName>
        <fullName>Acrosome RBCC protein</fullName>
    </alternativeName>
    <alternativeName>
        <fullName evidence="12">Haprin</fullName>
    </alternativeName>
    <alternativeName>
        <fullName evidence="13">RING-type E3 ubiquitin transferase TRIM36</fullName>
    </alternativeName>
    <alternativeName>
        <fullName>Tripartite motif-containing protein 36</fullName>
    </alternativeName>
</protein>
<proteinExistence type="evidence at protein level"/>
<comment type="function">
    <text evidence="9 10">E3 ubiquitin-protein ligase which mediates ubiquitination and subsequent proteasomal degradation of target proteins (PubMed:19232519). Involved in chromosome segregation and cell cycle regulation (PubMed:19232519). May play a role in the acrosome reaction and fertilization (PubMed:12917430).</text>
</comment>
<comment type="catalytic activity">
    <reaction evidence="10">
        <text>S-ubiquitinyl-[E2 ubiquitin-conjugating enzyme]-L-cysteine + [acceptor protein]-L-lysine = [E2 ubiquitin-conjugating enzyme]-L-cysteine + N(6)-ubiquitinyl-[acceptor protein]-L-lysine.</text>
        <dbReference type="EC" id="2.3.2.27"/>
    </reaction>
</comment>
<comment type="subunit">
    <text evidence="10">Interacts with CENPH.</text>
</comment>
<comment type="subcellular location">
    <subcellularLocation>
        <location evidence="1">Cytoplasm</location>
    </subcellularLocation>
    <subcellularLocation>
        <location evidence="9">Cytoplasmic vesicle</location>
        <location evidence="9">Secretory vesicle</location>
        <location evidence="9">Acrosome</location>
    </subcellularLocation>
    <subcellularLocation>
        <location evidence="10">Cytoplasm</location>
        <location evidence="10">Cytoskeleton</location>
    </subcellularLocation>
    <text evidence="9 10">Found in the acrosomal region of elongated spermatids and mature sperm (PubMed:12917430). Colocalizes with alpha-tubulin (PubMed:19232519).</text>
</comment>
<comment type="tissue specificity">
    <text evidence="9 11">Expressed in testis (PubMed:12917430). Strongly expressed in the neural tube region in 14.5 dpc embryos (PubMed:28087737).</text>
</comment>
<comment type="developmental stage">
    <text evidence="9">Expressed only in testicular germ cells after meiotic division. Expression was first detected at the age of 4 weeks.</text>
</comment>
<comment type="similarity">
    <text evidence="13">Belongs to the TRIM/RBCC family.</text>
</comment>
<comment type="sequence caution" evidence="13">
    <conflict type="frameshift">
        <sequence resource="EMBL-CDS" id="BAC76066"/>
    </conflict>
</comment>
<gene>
    <name type="primary">Trim36</name>
</gene>
<name>TRI36_MOUSE</name>
<reference key="1">
    <citation type="journal article" date="2003" name="J. Biol. Chem.">
        <title>Haprin, a novel haploid germ cell-specific RING finger protein involved in the acrosome reaction.</title>
        <authorList>
            <person name="Kitamura K."/>
            <person name="Tanaka H."/>
            <person name="Nishimune Y."/>
        </authorList>
    </citation>
    <scope>NUCLEOTIDE SEQUENCE [MRNA]</scope>
    <scope>FUNCTION</scope>
    <scope>SUBCELLULAR LOCATION</scope>
    <scope>TISSUE SPECIFICITY</scope>
    <scope>DEVELOPMENTAL STAGE</scope>
    <source>
        <tissue>Testis</tissue>
    </source>
</reference>
<reference key="2">
    <citation type="journal article" date="2006" name="J. Biol. Chem.">
        <title>Subclassification of the RBCC/TRIM superfamily reveals a novel motif necessary for microtubule binding.</title>
        <authorList>
            <person name="Short K.M."/>
            <person name="Cox T.C."/>
        </authorList>
    </citation>
    <scope>NUCLEOTIDE SEQUENCE [MRNA]</scope>
    <source>
        <strain>C57BL/6J</strain>
    </source>
</reference>
<reference key="3">
    <citation type="journal article" date="2004" name="Genome Res.">
        <title>The status, quality, and expansion of the NIH full-length cDNA project: the Mammalian Gene Collection (MGC).</title>
        <authorList>
            <consortium name="The MGC Project Team"/>
        </authorList>
    </citation>
    <scope>NUCLEOTIDE SEQUENCE [LARGE SCALE MRNA]</scope>
    <source>
        <strain>C57BL/6J</strain>
        <tissue>Brain</tissue>
    </source>
</reference>
<reference key="4">
    <citation type="journal article" date="2009" name="Biochem. Biophys. Res. Commun.">
        <title>TRIM36 interacts with the kinetochore protein CENP-H and delays cell cycle progression.</title>
        <authorList>
            <person name="Miyajima N."/>
            <person name="Maruyama S."/>
            <person name="Nonomura K."/>
            <person name="Hatakeyama S."/>
        </authorList>
    </citation>
    <scope>FUNCTION</scope>
    <scope>SUBCELLULAR LOCATION</scope>
    <scope>INTERACTION WITH CENPH</scope>
    <scope>CATALYTIC ACTIVITY</scope>
</reference>
<reference key="5">
    <citation type="journal article" date="2010" name="Cell">
        <title>A tissue-specific atlas of mouse protein phosphorylation and expression.</title>
        <authorList>
            <person name="Huttlin E.L."/>
            <person name="Jedrychowski M.P."/>
            <person name="Elias J.E."/>
            <person name="Goswami T."/>
            <person name="Rad R."/>
            <person name="Beausoleil S.A."/>
            <person name="Villen J."/>
            <person name="Haas W."/>
            <person name="Sowa M.E."/>
            <person name="Gygi S.P."/>
        </authorList>
    </citation>
    <scope>IDENTIFICATION BY MASS SPECTROMETRY [LARGE SCALE ANALYSIS]</scope>
    <source>
        <tissue>Brain</tissue>
        <tissue>Testis</tissue>
    </source>
</reference>
<reference key="6">
    <citation type="journal article" date="2017" name="Hum. Mol. Genet.">
        <title>A homozygous mutation in TRIM36 causes autosomal recessive anencephaly in an Indian family.</title>
        <authorList>
            <person name="Singh N."/>
            <person name="Kumble Bhat V."/>
            <person name="Tiwari A."/>
            <person name="Kodaganur S.G."/>
            <person name="Tontanahal S.J."/>
            <person name="Sarda A."/>
            <person name="Malini K.V."/>
            <person name="Kumar A."/>
        </authorList>
    </citation>
    <scope>TISSUE SPECIFICITY</scope>
</reference>
<keyword id="KW-0175">Coiled coil</keyword>
<keyword id="KW-0963">Cytoplasm</keyword>
<keyword id="KW-0968">Cytoplasmic vesicle</keyword>
<keyword id="KW-0206">Cytoskeleton</keyword>
<keyword id="KW-0479">Metal-binding</keyword>
<keyword id="KW-1185">Reference proteome</keyword>
<keyword id="KW-0677">Repeat</keyword>
<keyword id="KW-0808">Transferase</keyword>
<keyword id="KW-0833">Ubl conjugation pathway</keyword>
<keyword id="KW-0862">Zinc</keyword>
<keyword id="KW-0863">Zinc-finger</keyword>
<feature type="chain" id="PRO_0000056253" description="E3 ubiquitin-protein ligase Trim36">
    <location>
        <begin position="1"/>
        <end position="729"/>
    </location>
</feature>
<feature type="domain" description="COS" evidence="7">
    <location>
        <begin position="356"/>
        <end position="413"/>
    </location>
</feature>
<feature type="domain" description="Fibronectin type-III" evidence="5">
    <location>
        <begin position="416"/>
        <end position="511"/>
    </location>
</feature>
<feature type="domain" description="B30.2/SPRY" evidence="6">
    <location>
        <begin position="509"/>
        <end position="723"/>
    </location>
</feature>
<feature type="zinc finger region" description="RING-type; degenerate" evidence="4">
    <location>
        <begin position="33"/>
        <end position="84"/>
    </location>
</feature>
<feature type="zinc finger region" description="B box-type 1" evidence="3">
    <location>
        <begin position="154"/>
        <end position="192"/>
    </location>
</feature>
<feature type="zinc finger region" description="B box-type 2" evidence="3">
    <location>
        <begin position="207"/>
        <end position="249"/>
    </location>
</feature>
<feature type="region of interest" description="Disordered" evidence="8">
    <location>
        <begin position="606"/>
        <end position="626"/>
    </location>
</feature>
<feature type="coiled-coil region" evidence="2">
    <location>
        <begin position="271"/>
        <end position="302"/>
    </location>
</feature>
<feature type="compositionally biased region" description="Basic and acidic residues" evidence="8">
    <location>
        <begin position="613"/>
        <end position="622"/>
    </location>
</feature>
<feature type="binding site" evidence="3">
    <location>
        <position position="212"/>
    </location>
    <ligand>
        <name>Zn(2+)</name>
        <dbReference type="ChEBI" id="CHEBI:29105"/>
    </ligand>
</feature>
<feature type="binding site" evidence="3">
    <location>
        <position position="215"/>
    </location>
    <ligand>
        <name>Zn(2+)</name>
        <dbReference type="ChEBI" id="CHEBI:29105"/>
    </ligand>
</feature>
<feature type="binding site" evidence="3">
    <location>
        <position position="235"/>
    </location>
    <ligand>
        <name>Zn(2+)</name>
        <dbReference type="ChEBI" id="CHEBI:29105"/>
    </ligand>
</feature>
<feature type="binding site" evidence="3">
    <location>
        <position position="241"/>
    </location>
    <ligand>
        <name>Zn(2+)</name>
        <dbReference type="ChEBI" id="CHEBI:29105"/>
    </ligand>
</feature>
<feature type="sequence conflict" description="In Ref. 1; BAC76066." evidence="13" ref="1">
    <original>G</original>
    <variation>V</variation>
    <location>
        <position position="292"/>
    </location>
</feature>
<feature type="sequence conflict" description="In Ref. 1; BAC76066." evidence="13" ref="1">
    <original>N</original>
    <variation>D</variation>
    <location>
        <position position="532"/>
    </location>
</feature>
<feature type="sequence conflict" description="In Ref. 1; BAC76066." evidence="13" ref="1">
    <original>WL</original>
    <variation>CV</variation>
    <location>
        <begin position="601"/>
        <end position="602"/>
    </location>
</feature>